<name>PDRP_OCEIH</name>
<feature type="chain" id="PRO_0000196682" description="Putative pyruvate, phosphate dikinase regulatory protein">
    <location>
        <begin position="1"/>
        <end position="271"/>
    </location>
</feature>
<feature type="binding site" evidence="1">
    <location>
        <begin position="150"/>
        <end position="157"/>
    </location>
    <ligand>
        <name>ADP</name>
        <dbReference type="ChEBI" id="CHEBI:456216"/>
    </ligand>
</feature>
<comment type="function">
    <text evidence="1">Bifunctional serine/threonine kinase and phosphorylase involved in the regulation of the pyruvate, phosphate dikinase (PPDK) by catalyzing its phosphorylation/dephosphorylation.</text>
</comment>
<comment type="catalytic activity">
    <reaction evidence="1">
        <text>N(tele)-phospho-L-histidyl/L-threonyl-[pyruvate, phosphate dikinase] + ADP = N(tele)-phospho-L-histidyl/O-phospho-L-threonyl-[pyruvate, phosphate dikinase] + AMP + H(+)</text>
        <dbReference type="Rhea" id="RHEA:43692"/>
        <dbReference type="Rhea" id="RHEA-COMP:10650"/>
        <dbReference type="Rhea" id="RHEA-COMP:10651"/>
        <dbReference type="ChEBI" id="CHEBI:15378"/>
        <dbReference type="ChEBI" id="CHEBI:30013"/>
        <dbReference type="ChEBI" id="CHEBI:61977"/>
        <dbReference type="ChEBI" id="CHEBI:83586"/>
        <dbReference type="ChEBI" id="CHEBI:456215"/>
        <dbReference type="ChEBI" id="CHEBI:456216"/>
        <dbReference type="EC" id="2.7.11.32"/>
    </reaction>
</comment>
<comment type="catalytic activity">
    <reaction evidence="1">
        <text>N(tele)-phospho-L-histidyl/O-phospho-L-threonyl-[pyruvate, phosphate dikinase] + phosphate + H(+) = N(tele)-phospho-L-histidyl/L-threonyl-[pyruvate, phosphate dikinase] + diphosphate</text>
        <dbReference type="Rhea" id="RHEA:43696"/>
        <dbReference type="Rhea" id="RHEA-COMP:10650"/>
        <dbReference type="Rhea" id="RHEA-COMP:10651"/>
        <dbReference type="ChEBI" id="CHEBI:15378"/>
        <dbReference type="ChEBI" id="CHEBI:30013"/>
        <dbReference type="ChEBI" id="CHEBI:33019"/>
        <dbReference type="ChEBI" id="CHEBI:43474"/>
        <dbReference type="ChEBI" id="CHEBI:61977"/>
        <dbReference type="ChEBI" id="CHEBI:83586"/>
        <dbReference type="EC" id="2.7.4.27"/>
    </reaction>
</comment>
<comment type="similarity">
    <text evidence="1">Belongs to the pyruvate, phosphate/water dikinase regulatory protein family. PDRP subfamily.</text>
</comment>
<protein>
    <recommendedName>
        <fullName evidence="1">Putative pyruvate, phosphate dikinase regulatory protein</fullName>
        <shortName evidence="1">PPDK regulatory protein</shortName>
        <ecNumber evidence="1">2.7.11.32</ecNumber>
        <ecNumber evidence="1">2.7.4.27</ecNumber>
    </recommendedName>
</protein>
<evidence type="ECO:0000255" key="1">
    <source>
        <dbReference type="HAMAP-Rule" id="MF_00921"/>
    </source>
</evidence>
<proteinExistence type="inferred from homology"/>
<keyword id="KW-0418">Kinase</keyword>
<keyword id="KW-0547">Nucleotide-binding</keyword>
<keyword id="KW-1185">Reference proteome</keyword>
<keyword id="KW-0723">Serine/threonine-protein kinase</keyword>
<keyword id="KW-0808">Transferase</keyword>
<reference key="1">
    <citation type="journal article" date="2002" name="Nucleic Acids Res.">
        <title>Genome sequence of Oceanobacillus iheyensis isolated from the Iheya Ridge and its unexpected adaptive capabilities to extreme environments.</title>
        <authorList>
            <person name="Takami H."/>
            <person name="Takaki Y."/>
            <person name="Uchiyama I."/>
        </authorList>
    </citation>
    <scope>NUCLEOTIDE SEQUENCE [LARGE SCALE GENOMIC DNA]</scope>
    <source>
        <strain>DSM 14371 / CIP 107618 / JCM 11309 / KCTC 3954 / HTE831</strain>
    </source>
</reference>
<accession>Q8EPY4</accession>
<gene>
    <name type="ordered locus">OB1946</name>
</gene>
<sequence length="271" mass="30366">MSTQPIIYVLSDSVGETAELVVKAGLSQFKNGDYKIQRVPYVEDKETVDEFLALAKDTVSIVGFTLVDPELRAYVNSQAKKLEVEAIDIMGPTMDAMGRVFNRTPRLEAGLVHKLDEDYFKKIEAIEFAVKYDDGRDPRGIARADIILIGVSRTSKTPLSQYLAHKRIKVANVPIVPEVDPPEELMMVDPKKCIGLKITAEKLNSIRKERLKALGLGDQATYANMNRIEQELEYFQSIVDKIGCQVIDVSNKAVEETANHILRLKQENNSL</sequence>
<dbReference type="EC" id="2.7.11.32" evidence="1"/>
<dbReference type="EC" id="2.7.4.27" evidence="1"/>
<dbReference type="EMBL" id="BA000028">
    <property type="protein sequence ID" value="BAC13902.1"/>
    <property type="molecule type" value="Genomic_DNA"/>
</dbReference>
<dbReference type="RefSeq" id="WP_011066343.1">
    <property type="nucleotide sequence ID" value="NC_004193.1"/>
</dbReference>
<dbReference type="SMR" id="Q8EPY4"/>
<dbReference type="STRING" id="221109.gene:10734192"/>
<dbReference type="KEGG" id="oih:OB1946"/>
<dbReference type="eggNOG" id="COG1806">
    <property type="taxonomic scope" value="Bacteria"/>
</dbReference>
<dbReference type="HOGENOM" id="CLU_046206_2_1_9"/>
<dbReference type="OrthoDB" id="9782201at2"/>
<dbReference type="PhylomeDB" id="Q8EPY4"/>
<dbReference type="Proteomes" id="UP000000822">
    <property type="component" value="Chromosome"/>
</dbReference>
<dbReference type="GO" id="GO:0043531">
    <property type="term" value="F:ADP binding"/>
    <property type="evidence" value="ECO:0007669"/>
    <property type="project" value="UniProtKB-UniRule"/>
</dbReference>
<dbReference type="GO" id="GO:0005524">
    <property type="term" value="F:ATP binding"/>
    <property type="evidence" value="ECO:0007669"/>
    <property type="project" value="InterPro"/>
</dbReference>
<dbReference type="GO" id="GO:0016776">
    <property type="term" value="F:phosphotransferase activity, phosphate group as acceptor"/>
    <property type="evidence" value="ECO:0007669"/>
    <property type="project" value="UniProtKB-UniRule"/>
</dbReference>
<dbReference type="GO" id="GO:0004674">
    <property type="term" value="F:protein serine/threonine kinase activity"/>
    <property type="evidence" value="ECO:0007669"/>
    <property type="project" value="UniProtKB-UniRule"/>
</dbReference>
<dbReference type="HAMAP" id="MF_00921">
    <property type="entry name" value="PDRP"/>
    <property type="match status" value="1"/>
</dbReference>
<dbReference type="InterPro" id="IPR005177">
    <property type="entry name" value="Kinase-pyrophosphorylase"/>
</dbReference>
<dbReference type="InterPro" id="IPR026565">
    <property type="entry name" value="PPDK_reg"/>
</dbReference>
<dbReference type="NCBIfam" id="NF003742">
    <property type="entry name" value="PRK05339.1"/>
    <property type="match status" value="1"/>
</dbReference>
<dbReference type="PANTHER" id="PTHR31756">
    <property type="entry name" value="PYRUVATE, PHOSPHATE DIKINASE REGULATORY PROTEIN 1, CHLOROPLASTIC"/>
    <property type="match status" value="1"/>
</dbReference>
<dbReference type="PANTHER" id="PTHR31756:SF3">
    <property type="entry name" value="PYRUVATE, PHOSPHATE DIKINASE REGULATORY PROTEIN 1, CHLOROPLASTIC"/>
    <property type="match status" value="1"/>
</dbReference>
<dbReference type="Pfam" id="PF03618">
    <property type="entry name" value="Kinase-PPPase"/>
    <property type="match status" value="1"/>
</dbReference>
<organism>
    <name type="scientific">Oceanobacillus iheyensis (strain DSM 14371 / CIP 107618 / JCM 11309 / KCTC 3954 / HTE831)</name>
    <dbReference type="NCBI Taxonomy" id="221109"/>
    <lineage>
        <taxon>Bacteria</taxon>
        <taxon>Bacillati</taxon>
        <taxon>Bacillota</taxon>
        <taxon>Bacilli</taxon>
        <taxon>Bacillales</taxon>
        <taxon>Bacillaceae</taxon>
        <taxon>Oceanobacillus</taxon>
    </lineage>
</organism>